<sequence>MKNLIAELLLKLAQKEEESKELVAQVEALEIIVTAMLRNMAQSEQQMLIRQVEGALEGVKPDASVPDHDTELLRQYVKKLLRHPRH</sequence>
<name>IRAP_SALAR</name>
<gene>
    <name evidence="1" type="primary">iraP</name>
    <name type="ordered locus">SARI_02543</name>
</gene>
<dbReference type="EMBL" id="CP000880">
    <property type="protein sequence ID" value="ABX22401.1"/>
    <property type="status" value="ALT_INIT"/>
    <property type="molecule type" value="Genomic_DNA"/>
</dbReference>
<dbReference type="SMR" id="A9MMS6"/>
<dbReference type="STRING" id="41514.SARI_02543"/>
<dbReference type="KEGG" id="ses:SARI_02543"/>
<dbReference type="HOGENOM" id="CLU_169517_0_0_6"/>
<dbReference type="Proteomes" id="UP000002084">
    <property type="component" value="Chromosome"/>
</dbReference>
<dbReference type="GO" id="GO:0005737">
    <property type="term" value="C:cytoplasm"/>
    <property type="evidence" value="ECO:0007669"/>
    <property type="project" value="UniProtKB-SubCell"/>
</dbReference>
<dbReference type="GO" id="GO:0009267">
    <property type="term" value="P:cellular response to starvation"/>
    <property type="evidence" value="ECO:0007669"/>
    <property type="project" value="UniProtKB-UniRule"/>
</dbReference>
<dbReference type="HAMAP" id="MF_01198">
    <property type="entry name" value="Anti_adapt_IraP"/>
    <property type="match status" value="1"/>
</dbReference>
<dbReference type="InterPro" id="IPR019732">
    <property type="entry name" value="SigmaS_Anti-adapt_IraP"/>
</dbReference>
<dbReference type="NCBIfam" id="NF007598">
    <property type="entry name" value="PRK10244.1"/>
    <property type="match status" value="1"/>
</dbReference>
<dbReference type="Pfam" id="PF10796">
    <property type="entry name" value="Anti-adapt_IraP"/>
    <property type="match status" value="1"/>
</dbReference>
<feature type="chain" id="PRO_0000337858" description="Anti-adapter protein IraP">
    <location>
        <begin position="1"/>
        <end position="86"/>
    </location>
</feature>
<feature type="coiled-coil region" evidence="1">
    <location>
        <begin position="1"/>
        <end position="47"/>
    </location>
</feature>
<protein>
    <recommendedName>
        <fullName evidence="1">Anti-adapter protein IraP</fullName>
    </recommendedName>
</protein>
<accession>A9MMS6</accession>
<evidence type="ECO:0000255" key="1">
    <source>
        <dbReference type="HAMAP-Rule" id="MF_01198"/>
    </source>
</evidence>
<evidence type="ECO:0000305" key="2"/>
<reference key="1">
    <citation type="submission" date="2007-11" db="EMBL/GenBank/DDBJ databases">
        <authorList>
            <consortium name="The Salmonella enterica serovar Arizonae Genome Sequencing Project"/>
            <person name="McClelland M."/>
            <person name="Sanderson E.K."/>
            <person name="Porwollik S."/>
            <person name="Spieth J."/>
            <person name="Clifton W.S."/>
            <person name="Fulton R."/>
            <person name="Chunyan W."/>
            <person name="Wollam A."/>
            <person name="Shah N."/>
            <person name="Pepin K."/>
            <person name="Bhonagiri V."/>
            <person name="Nash W."/>
            <person name="Johnson M."/>
            <person name="Thiruvilangam P."/>
            <person name="Wilson R."/>
        </authorList>
    </citation>
    <scope>NUCLEOTIDE SEQUENCE [LARGE SCALE GENOMIC DNA]</scope>
    <source>
        <strain>ATCC BAA-731 / CDC346-86 / RSK2980</strain>
    </source>
</reference>
<keyword id="KW-0175">Coiled coil</keyword>
<keyword id="KW-0963">Cytoplasm</keyword>
<keyword id="KW-1185">Reference proteome</keyword>
<keyword id="KW-0346">Stress response</keyword>
<organism>
    <name type="scientific">Salmonella arizonae (strain ATCC BAA-731 / CDC346-86 / RSK2980)</name>
    <dbReference type="NCBI Taxonomy" id="41514"/>
    <lineage>
        <taxon>Bacteria</taxon>
        <taxon>Pseudomonadati</taxon>
        <taxon>Pseudomonadota</taxon>
        <taxon>Gammaproteobacteria</taxon>
        <taxon>Enterobacterales</taxon>
        <taxon>Enterobacteriaceae</taxon>
        <taxon>Salmonella</taxon>
    </lineage>
</organism>
<proteinExistence type="inferred from homology"/>
<comment type="function">
    <text evidence="1">Inhibits RpoS proteolysis by regulating RssB activity, thereby increasing the stability of the sigma stress factor RpoS especially during phosphate and magnesium starvation, but also in stationary phase and during nitrogen starvation. Its effect on RpoS stability is due to its interaction with RssB, which probably blocks the interaction of RssB with RpoS, and the consequent delivery of the RssB-RpoS complex to the ClpXP protein degradation pathway.</text>
</comment>
<comment type="subunit">
    <text evidence="1">Interacts with RssB.</text>
</comment>
<comment type="subcellular location">
    <subcellularLocation>
        <location evidence="1">Cytoplasm</location>
    </subcellularLocation>
</comment>
<comment type="similarity">
    <text evidence="1">Belongs to the IraP family.</text>
</comment>
<comment type="sequence caution" evidence="2">
    <conflict type="erroneous initiation">
        <sequence resource="EMBL-CDS" id="ABX22401"/>
    </conflict>
</comment>